<reference key="1">
    <citation type="journal article" date="1991" name="Yeast">
        <title>The allantoinase (DAL1) gene of Saccharomyces cerevisiae.</title>
        <authorList>
            <person name="Buckholz R.G."/>
            <person name="Cooper T.G."/>
        </authorList>
    </citation>
    <scope>NUCLEOTIDE SEQUENCE [GENOMIC DNA]</scope>
    <scope>FUNCTION</scope>
    <scope>CATALYTIC ACTIVITY</scope>
</reference>
<reference key="2">
    <citation type="journal article" date="1992" name="Yeast">
        <authorList>
            <person name="Buckholz R.G."/>
            <person name="Cooper T.G."/>
        </authorList>
    </citation>
    <scope>ERRATUM OF PUBMED:1803816</scope>
</reference>
<reference key="3">
    <citation type="journal article" date="1997" name="Nature">
        <title>The nucleotide sequence of Saccharomyces cerevisiae chromosome IX.</title>
        <authorList>
            <person name="Churcher C.M."/>
            <person name="Bowman S."/>
            <person name="Badcock K."/>
            <person name="Bankier A.T."/>
            <person name="Brown D."/>
            <person name="Chillingworth T."/>
            <person name="Connor R."/>
            <person name="Devlin K."/>
            <person name="Gentles S."/>
            <person name="Hamlin N."/>
            <person name="Harris D.E."/>
            <person name="Horsnell T."/>
            <person name="Hunt S."/>
            <person name="Jagels K."/>
            <person name="Jones M."/>
            <person name="Lye G."/>
            <person name="Moule S."/>
            <person name="Odell C."/>
            <person name="Pearson D."/>
            <person name="Rajandream M.A."/>
            <person name="Rice P."/>
            <person name="Rowley N."/>
            <person name="Skelton J."/>
            <person name="Smith V."/>
            <person name="Walsh S.V."/>
            <person name="Whitehead S."/>
            <person name="Barrell B.G."/>
        </authorList>
    </citation>
    <scope>NUCLEOTIDE SEQUENCE [LARGE SCALE GENOMIC DNA]</scope>
    <source>
        <strain>ATCC 204508 / S288c</strain>
    </source>
</reference>
<reference key="4">
    <citation type="journal article" date="2014" name="G3 (Bethesda)">
        <title>The reference genome sequence of Saccharomyces cerevisiae: Then and now.</title>
        <authorList>
            <person name="Engel S.R."/>
            <person name="Dietrich F.S."/>
            <person name="Fisk D.G."/>
            <person name="Binkley G."/>
            <person name="Balakrishnan R."/>
            <person name="Costanzo M.C."/>
            <person name="Dwight S.S."/>
            <person name="Hitz B.C."/>
            <person name="Karra K."/>
            <person name="Nash R.S."/>
            <person name="Weng S."/>
            <person name="Wong E.D."/>
            <person name="Lloyd P."/>
            <person name="Skrzypek M.S."/>
            <person name="Miyasato S.R."/>
            <person name="Simison M."/>
            <person name="Cherry J.M."/>
        </authorList>
    </citation>
    <scope>GENOME REANNOTATION</scope>
    <source>
        <strain>ATCC 204508 / S288c</strain>
    </source>
</reference>
<proteinExistence type="evidence at protein level"/>
<comment type="function">
    <text evidence="3">Catalyzes the conversion of allantoin (5-ureidohydantoin) to allantoic acid by hydrolytic cleavage of the five-member hydantoin ring. Involved in the utilization of purines as secondary nitrogen sources, when primary sources are limiting.</text>
</comment>
<comment type="catalytic activity">
    <reaction evidence="3">
        <text>(S)-allantoin + H2O = allantoate + H(+)</text>
        <dbReference type="Rhea" id="RHEA:17029"/>
        <dbReference type="ChEBI" id="CHEBI:15377"/>
        <dbReference type="ChEBI" id="CHEBI:15378"/>
        <dbReference type="ChEBI" id="CHEBI:15678"/>
        <dbReference type="ChEBI" id="CHEBI:17536"/>
        <dbReference type="EC" id="3.5.2.5"/>
    </reaction>
    <physiologicalReaction direction="left-to-right" evidence="3">
        <dbReference type="Rhea" id="RHEA:17030"/>
    </physiologicalReaction>
</comment>
<comment type="cofactor">
    <cofactor evidence="1">
        <name>Zn(2+)</name>
        <dbReference type="ChEBI" id="CHEBI:29105"/>
    </cofactor>
    <text evidence="1">Binds 2 Zn(2+) ions per subunit.</text>
</comment>
<comment type="pathway">
    <text evidence="3">Nitrogen metabolism; (S)-allantoin degradation; allantoate from (S)-allantoin: step 1/1.</text>
</comment>
<comment type="subunit">
    <text evidence="1">Homotetramer.</text>
</comment>
<comment type="PTM">
    <text evidence="1">Carboxylation allows a single lysine to coordinate two zinc ions.</text>
</comment>
<comment type="similarity">
    <text evidence="2">Belongs to the metallo-dependent hydrolases superfamily. Allantoinase family.</text>
</comment>
<organism>
    <name type="scientific">Saccharomyces cerevisiae (strain ATCC 204508 / S288c)</name>
    <name type="common">Baker's yeast</name>
    <dbReference type="NCBI Taxonomy" id="559292"/>
    <lineage>
        <taxon>Eukaryota</taxon>
        <taxon>Fungi</taxon>
        <taxon>Dikarya</taxon>
        <taxon>Ascomycota</taxon>
        <taxon>Saccharomycotina</taxon>
        <taxon>Saccharomycetes</taxon>
        <taxon>Saccharomycetales</taxon>
        <taxon>Saccharomycetaceae</taxon>
        <taxon>Saccharomyces</taxon>
    </lineage>
</organism>
<dbReference type="EC" id="3.5.2.5" evidence="3"/>
<dbReference type="EMBL" id="M69294">
    <property type="protein sequence ID" value="AAA34553.1"/>
    <property type="molecule type" value="Genomic_DNA"/>
</dbReference>
<dbReference type="EMBL" id="Z38061">
    <property type="protein sequence ID" value="CAA86187.1"/>
    <property type="molecule type" value="Genomic_DNA"/>
</dbReference>
<dbReference type="EMBL" id="BK006942">
    <property type="protein sequence ID" value="DAA08574.1"/>
    <property type="molecule type" value="Genomic_DNA"/>
</dbReference>
<dbReference type="PIR" id="S48489">
    <property type="entry name" value="S48489"/>
</dbReference>
<dbReference type="RefSeq" id="NP_012293.3">
    <property type="nucleotide sequence ID" value="NM_001179549.3"/>
</dbReference>
<dbReference type="SMR" id="P32375"/>
<dbReference type="BioGRID" id="35018">
    <property type="interactions" value="60"/>
</dbReference>
<dbReference type="DIP" id="DIP-4280N"/>
<dbReference type="FunCoup" id="P32375">
    <property type="interactions" value="1533"/>
</dbReference>
<dbReference type="STRING" id="4932.YIR027C"/>
<dbReference type="PaxDb" id="4932-YIR027C"/>
<dbReference type="PeptideAtlas" id="P32375"/>
<dbReference type="EnsemblFungi" id="YIR027C_mRNA">
    <property type="protein sequence ID" value="YIR027C"/>
    <property type="gene ID" value="YIR027C"/>
</dbReference>
<dbReference type="GeneID" id="854845"/>
<dbReference type="KEGG" id="sce:YIR027C"/>
<dbReference type="AGR" id="SGD:S000001466"/>
<dbReference type="SGD" id="S000001466">
    <property type="gene designation" value="DAL1"/>
</dbReference>
<dbReference type="VEuPathDB" id="FungiDB:YIR027C"/>
<dbReference type="eggNOG" id="KOG2584">
    <property type="taxonomic scope" value="Eukaryota"/>
</dbReference>
<dbReference type="GeneTree" id="ENSGT01030000234527"/>
<dbReference type="HOGENOM" id="CLU_015572_4_0_1"/>
<dbReference type="InParanoid" id="P32375"/>
<dbReference type="OMA" id="SRLHVCH"/>
<dbReference type="OrthoDB" id="10258955at2759"/>
<dbReference type="BioCyc" id="MetaCyc:YIR027C-MONOMER"/>
<dbReference type="BioCyc" id="YEAST:YIR027C-MONOMER"/>
<dbReference type="UniPathway" id="UPA00395">
    <property type="reaction ID" value="UER00653"/>
</dbReference>
<dbReference type="BioGRID-ORCS" id="854845">
    <property type="hits" value="5 hits in 10 CRISPR screens"/>
</dbReference>
<dbReference type="PRO" id="PR:P32375"/>
<dbReference type="Proteomes" id="UP000002311">
    <property type="component" value="Chromosome IX"/>
</dbReference>
<dbReference type="RNAct" id="P32375">
    <property type="molecule type" value="protein"/>
</dbReference>
<dbReference type="GO" id="GO:0005737">
    <property type="term" value="C:cytoplasm"/>
    <property type="evidence" value="ECO:0000318"/>
    <property type="project" value="GO_Central"/>
</dbReference>
<dbReference type="GO" id="GO:0004038">
    <property type="term" value="F:allantoinase activity"/>
    <property type="evidence" value="ECO:0000315"/>
    <property type="project" value="SGD"/>
</dbReference>
<dbReference type="GO" id="GO:0050897">
    <property type="term" value="F:cobalt ion binding"/>
    <property type="evidence" value="ECO:0007669"/>
    <property type="project" value="InterPro"/>
</dbReference>
<dbReference type="GO" id="GO:0008270">
    <property type="term" value="F:zinc ion binding"/>
    <property type="evidence" value="ECO:0007669"/>
    <property type="project" value="InterPro"/>
</dbReference>
<dbReference type="GO" id="GO:0009442">
    <property type="term" value="P:allantoin assimilation pathway"/>
    <property type="evidence" value="ECO:0000315"/>
    <property type="project" value="SGD"/>
</dbReference>
<dbReference type="GO" id="GO:0006145">
    <property type="term" value="P:purine nucleobase catabolic process"/>
    <property type="evidence" value="ECO:0000318"/>
    <property type="project" value="GO_Central"/>
</dbReference>
<dbReference type="CDD" id="cd01315">
    <property type="entry name" value="L-HYD_ALN"/>
    <property type="match status" value="1"/>
</dbReference>
<dbReference type="FunFam" id="2.30.40.10:FF:000028">
    <property type="entry name" value="Dal1p"/>
    <property type="match status" value="1"/>
</dbReference>
<dbReference type="FunFam" id="3.20.20.140:FF:000097">
    <property type="entry name" value="Dal1p"/>
    <property type="match status" value="1"/>
</dbReference>
<dbReference type="Gene3D" id="3.20.20.140">
    <property type="entry name" value="Metal-dependent hydrolases"/>
    <property type="match status" value="1"/>
</dbReference>
<dbReference type="Gene3D" id="2.30.40.10">
    <property type="entry name" value="Urease, subunit C, domain 1"/>
    <property type="match status" value="1"/>
</dbReference>
<dbReference type="InterPro" id="IPR017593">
    <property type="entry name" value="Allantoinase"/>
</dbReference>
<dbReference type="InterPro" id="IPR006680">
    <property type="entry name" value="Amidohydro-rel"/>
</dbReference>
<dbReference type="InterPro" id="IPR050138">
    <property type="entry name" value="DHOase/Allantoinase_Hydrolase"/>
</dbReference>
<dbReference type="InterPro" id="IPR002195">
    <property type="entry name" value="Dihydroorotase_CS"/>
</dbReference>
<dbReference type="InterPro" id="IPR018228">
    <property type="entry name" value="DNase_TatD-rel_CS"/>
</dbReference>
<dbReference type="InterPro" id="IPR011059">
    <property type="entry name" value="Metal-dep_hydrolase_composite"/>
</dbReference>
<dbReference type="InterPro" id="IPR032466">
    <property type="entry name" value="Metal_Hydrolase"/>
</dbReference>
<dbReference type="NCBIfam" id="TIGR03178">
    <property type="entry name" value="allantoinase"/>
    <property type="match status" value="1"/>
</dbReference>
<dbReference type="PANTHER" id="PTHR43668">
    <property type="entry name" value="ALLANTOINASE"/>
    <property type="match status" value="1"/>
</dbReference>
<dbReference type="PANTHER" id="PTHR43668:SF2">
    <property type="entry name" value="ALLANTOINASE"/>
    <property type="match status" value="1"/>
</dbReference>
<dbReference type="Pfam" id="PF01979">
    <property type="entry name" value="Amidohydro_1"/>
    <property type="match status" value="1"/>
</dbReference>
<dbReference type="SUPFAM" id="SSF51338">
    <property type="entry name" value="Composite domain of metallo-dependent hydrolases"/>
    <property type="match status" value="1"/>
</dbReference>
<dbReference type="SUPFAM" id="SSF51556">
    <property type="entry name" value="Metallo-dependent hydrolases"/>
    <property type="match status" value="1"/>
</dbReference>
<dbReference type="PROSITE" id="PS00482">
    <property type="entry name" value="DIHYDROOROTASE_1"/>
    <property type="match status" value="1"/>
</dbReference>
<sequence length="460" mass="50126">MPINAITSDHVIINGANKPATIVYSTESGTILDVLEGSVVMEKTEITKYEIHTLENVSPCTILPGLVDSHVHLNEPGRTSWEGFETGTQAAISGGVTTVVDMPLNAIPPTTNVENFRIKLEAAEGQMWCDVGFWGGLVPHNLPDLIPLVKAGVRGFKGFLLDSGVEEFPPIGKEYIEEALKVLAEEDTMMMFHAELPKAHEDQQQPEQSHREYSSFLSSRPDSFEIDAINLILECLRARNGPVPPVHIVHLASMKAIPLIRKARASGLPVTTETCFHYLCIAAEQIPDGATYFKCCPPIRSESNRQGLWDALREGVIGSVVSDHSPCTPELKNLQKGDFFDSWGGIASVGLGLPLMFTQGCSLVDIVTWCCKNTSHQVGLSHQKGTIAPGYDADLVVFDTASKHKISNSSVYFKNKLTAYNGMTVKGTVLKTILRGQVVYTNANGVSKTPLGQTLLDSRR</sequence>
<keyword id="KW-0378">Hydrolase</keyword>
<keyword id="KW-0479">Metal-binding</keyword>
<keyword id="KW-0659">Purine metabolism</keyword>
<keyword id="KW-1185">Reference proteome</keyword>
<keyword id="KW-0862">Zinc</keyword>
<feature type="chain" id="PRO_0000165939" description="Allantoinase">
    <location>
        <begin position="1"/>
        <end position="460"/>
    </location>
</feature>
<feature type="binding site" evidence="1">
    <location>
        <position position="70"/>
    </location>
    <ligand>
        <name>Zn(2+)</name>
        <dbReference type="ChEBI" id="CHEBI:29105"/>
        <label>1</label>
    </ligand>
</feature>
<feature type="binding site" evidence="1">
    <location>
        <position position="72"/>
    </location>
    <ligand>
        <name>Zn(2+)</name>
        <dbReference type="ChEBI" id="CHEBI:29105"/>
        <label>1</label>
    </ligand>
</feature>
<feature type="binding site" description="via carbamate group" evidence="1">
    <location>
        <position position="157"/>
    </location>
    <ligand>
        <name>Zn(2+)</name>
        <dbReference type="ChEBI" id="CHEBI:29105"/>
        <label>1</label>
    </ligand>
</feature>
<feature type="binding site" description="via carbamate group" evidence="1">
    <location>
        <position position="157"/>
    </location>
    <ligand>
        <name>Zn(2+)</name>
        <dbReference type="ChEBI" id="CHEBI:29105"/>
        <label>2</label>
    </ligand>
</feature>
<feature type="binding site" evidence="1">
    <location>
        <position position="193"/>
    </location>
    <ligand>
        <name>Zn(2+)</name>
        <dbReference type="ChEBI" id="CHEBI:29105"/>
        <label>2</label>
    </ligand>
</feature>
<feature type="binding site" evidence="1">
    <location>
        <position position="250"/>
    </location>
    <ligand>
        <name>Zn(2+)</name>
        <dbReference type="ChEBI" id="CHEBI:29105"/>
        <label>2</label>
    </ligand>
</feature>
<feature type="binding site" evidence="1">
    <location>
        <position position="323"/>
    </location>
    <ligand>
        <name>Zn(2+)</name>
        <dbReference type="ChEBI" id="CHEBI:29105"/>
        <label>1</label>
    </ligand>
</feature>
<feature type="modified residue" description="N6-carboxylysine" evidence="1">
    <location>
        <position position="157"/>
    </location>
</feature>
<feature type="sequence conflict" description="In Ref. 1; AAA34553." evidence="2" ref="1">
    <original>VVYTNANGVSKTPLGQTLLDSRR</original>
    <variation>WYIRMPTESRKHHWVKLCLILDVKLKLQIFIKEIL</variation>
    <location>
        <begin position="438"/>
        <end position="460"/>
    </location>
</feature>
<accession>P32375</accession>
<accession>D6VVV8</accession>
<gene>
    <name type="primary">DAL1</name>
    <name type="ordered locus">YIR027C</name>
</gene>
<protein>
    <recommendedName>
        <fullName>Allantoinase</fullName>
        <ecNumber evidence="3">3.5.2.5</ecNumber>
    </recommendedName>
</protein>
<name>ALN_YEAST</name>
<evidence type="ECO:0000250" key="1"/>
<evidence type="ECO:0000305" key="2"/>
<evidence type="ECO:0000305" key="3">
    <source>
    </source>
</evidence>